<proteinExistence type="inferred from homology"/>
<protein>
    <recommendedName>
        <fullName evidence="1">Protein TsgA homolog</fullName>
    </recommendedName>
</protein>
<comment type="subcellular location">
    <subcellularLocation>
        <location evidence="1">Cell inner membrane</location>
        <topology evidence="1">Multi-pass membrane protein</topology>
    </subcellularLocation>
</comment>
<comment type="similarity">
    <text evidence="1">Belongs to the major facilitator superfamily. TsgA family.</text>
</comment>
<organism>
    <name type="scientific">Edwardsiella ictaluri (strain 93-146)</name>
    <dbReference type="NCBI Taxonomy" id="634503"/>
    <lineage>
        <taxon>Bacteria</taxon>
        <taxon>Pseudomonadati</taxon>
        <taxon>Pseudomonadota</taxon>
        <taxon>Gammaproteobacteria</taxon>
        <taxon>Enterobacterales</taxon>
        <taxon>Hafniaceae</taxon>
        <taxon>Edwardsiella</taxon>
    </lineage>
</organism>
<reference key="1">
    <citation type="submission" date="2009-03" db="EMBL/GenBank/DDBJ databases">
        <title>Complete genome sequence of Edwardsiella ictaluri 93-146.</title>
        <authorList>
            <person name="Williams M.L."/>
            <person name="Gillaspy A.F."/>
            <person name="Dyer D.W."/>
            <person name="Thune R.L."/>
            <person name="Waldbieser G.C."/>
            <person name="Schuster S.C."/>
            <person name="Gipson J."/>
            <person name="Zaitshik J."/>
            <person name="Landry C."/>
            <person name="Lawrence M.L."/>
        </authorList>
    </citation>
    <scope>NUCLEOTIDE SEQUENCE [LARGE SCALE GENOMIC DNA]</scope>
    <source>
        <strain>93-146</strain>
    </source>
</reference>
<evidence type="ECO:0000255" key="1">
    <source>
        <dbReference type="HAMAP-Rule" id="MF_01044"/>
    </source>
</evidence>
<sequence>MTDSNRIRLTWISFFSYALTGALVIVTGMVMGNIAEYFNLPISSMSNTFTFLNTGILVSIFLNAWLMEIIPLKRQLVFGFILMILAIAGLMVGHNLAIFSACMFVLGVVSGITMSIGTFLITHIYTGRQRGSRLLFTDSFFSMAGMVFPIIAATLLAQHVAWYWVYACIGVLYLAIFILTLCSDFPQLGKQAVGDSQPVRKEKWGIGVLFLSIAALCYILGQLGFIQWVPEYAAKRFGMSIEESGGLVSNFWTAYMVGMWFFSVALRFFDLQRIVTVLAALSTFMMYMFVSSQQSAMLSMYILGLGFVSSAIYTTLITLGSQQTKVSSPKLVNFILTCGTIGTMLTFVVTGPIVAHSGAHAALATANGLYLVVFVMCVLLGFVTKHRLHGHAAK</sequence>
<accession>C5BGP5</accession>
<name>TSGA_EDWI9</name>
<feature type="chain" id="PRO_1000213419" description="Protein TsgA homolog">
    <location>
        <begin position="1"/>
        <end position="394"/>
    </location>
</feature>
<feature type="transmembrane region" description="Helical" evidence="1">
    <location>
        <begin position="11"/>
        <end position="31"/>
    </location>
</feature>
<feature type="transmembrane region" description="Helical" evidence="1">
    <location>
        <begin position="51"/>
        <end position="71"/>
    </location>
</feature>
<feature type="transmembrane region" description="Helical" evidence="1">
    <location>
        <begin position="76"/>
        <end position="96"/>
    </location>
</feature>
<feature type="transmembrane region" description="Helical" evidence="1">
    <location>
        <begin position="101"/>
        <end position="121"/>
    </location>
</feature>
<feature type="transmembrane region" description="Helical" evidence="1">
    <location>
        <begin position="134"/>
        <end position="154"/>
    </location>
</feature>
<feature type="transmembrane region" description="Helical" evidence="1">
    <location>
        <begin position="160"/>
        <end position="180"/>
    </location>
</feature>
<feature type="transmembrane region" description="Helical" evidence="1">
    <location>
        <begin position="206"/>
        <end position="226"/>
    </location>
</feature>
<feature type="transmembrane region" description="Helical" evidence="1">
    <location>
        <begin position="246"/>
        <end position="266"/>
    </location>
</feature>
<feature type="transmembrane region" description="Helical" evidence="1">
    <location>
        <begin position="274"/>
        <end position="294"/>
    </location>
</feature>
<feature type="transmembrane region" description="Helical" evidence="1">
    <location>
        <begin position="297"/>
        <end position="317"/>
    </location>
</feature>
<feature type="transmembrane region" description="Helical" evidence="1">
    <location>
        <begin position="334"/>
        <end position="354"/>
    </location>
</feature>
<feature type="transmembrane region" description="Helical" evidence="1">
    <location>
        <begin position="363"/>
        <end position="383"/>
    </location>
</feature>
<dbReference type="EMBL" id="CP001600">
    <property type="protein sequence ID" value="ACR70742.1"/>
    <property type="molecule type" value="Genomic_DNA"/>
</dbReference>
<dbReference type="RefSeq" id="WP_015872783.1">
    <property type="nucleotide sequence ID" value="NZ_CP169062.1"/>
</dbReference>
<dbReference type="SMR" id="C5BGP5"/>
<dbReference type="STRING" id="67780.B6E78_09730"/>
<dbReference type="GeneID" id="69540457"/>
<dbReference type="KEGG" id="eic:NT01EI_3614"/>
<dbReference type="PATRIC" id="fig|634503.3.peg.3221"/>
<dbReference type="HOGENOM" id="CLU_056916_0_0_6"/>
<dbReference type="OrthoDB" id="8577032at2"/>
<dbReference type="Proteomes" id="UP000001485">
    <property type="component" value="Chromosome"/>
</dbReference>
<dbReference type="GO" id="GO:0005886">
    <property type="term" value="C:plasma membrane"/>
    <property type="evidence" value="ECO:0007669"/>
    <property type="project" value="UniProtKB-SubCell"/>
</dbReference>
<dbReference type="GO" id="GO:0022857">
    <property type="term" value="F:transmembrane transporter activity"/>
    <property type="evidence" value="ECO:0007669"/>
    <property type="project" value="InterPro"/>
</dbReference>
<dbReference type="Gene3D" id="1.20.1250.20">
    <property type="entry name" value="MFS general substrate transporter like domains"/>
    <property type="match status" value="2"/>
</dbReference>
<dbReference type="HAMAP" id="MF_01044">
    <property type="entry name" value="MFS_TsgA"/>
    <property type="match status" value="1"/>
</dbReference>
<dbReference type="InterPro" id="IPR011701">
    <property type="entry name" value="MFS"/>
</dbReference>
<dbReference type="InterPro" id="IPR020846">
    <property type="entry name" value="MFS_dom"/>
</dbReference>
<dbReference type="InterPro" id="IPR036259">
    <property type="entry name" value="MFS_trans_sf"/>
</dbReference>
<dbReference type="InterPro" id="IPR023528">
    <property type="entry name" value="MFS_TsgA"/>
</dbReference>
<dbReference type="InterPro" id="IPR050375">
    <property type="entry name" value="MFS_TsgA-like"/>
</dbReference>
<dbReference type="NCBIfam" id="NF002982">
    <property type="entry name" value="PRK03699.1"/>
    <property type="match status" value="1"/>
</dbReference>
<dbReference type="PANTHER" id="PTHR43702">
    <property type="entry name" value="L-FUCOSE-PROTON SYMPORTER"/>
    <property type="match status" value="1"/>
</dbReference>
<dbReference type="PANTHER" id="PTHR43702:SF3">
    <property type="entry name" value="PROTEIN TSGA"/>
    <property type="match status" value="1"/>
</dbReference>
<dbReference type="Pfam" id="PF07690">
    <property type="entry name" value="MFS_1"/>
    <property type="match status" value="1"/>
</dbReference>
<dbReference type="SUPFAM" id="SSF103473">
    <property type="entry name" value="MFS general substrate transporter"/>
    <property type="match status" value="1"/>
</dbReference>
<dbReference type="PROSITE" id="PS50850">
    <property type="entry name" value="MFS"/>
    <property type="match status" value="1"/>
</dbReference>
<keyword id="KW-0997">Cell inner membrane</keyword>
<keyword id="KW-1003">Cell membrane</keyword>
<keyword id="KW-0472">Membrane</keyword>
<keyword id="KW-0812">Transmembrane</keyword>
<keyword id="KW-1133">Transmembrane helix</keyword>
<gene>
    <name evidence="1" type="primary">tsgA</name>
    <name type="ordered locus">NT01EI_3614</name>
</gene>